<dbReference type="EC" id="2.3.1.35" evidence="1"/>
<dbReference type="EC" id="2.3.1.1" evidence="1"/>
<dbReference type="EMBL" id="AE010300">
    <property type="protein sequence ID" value="AAN51303.2"/>
    <property type="status" value="ALT_INIT"/>
    <property type="molecule type" value="Genomic_DNA"/>
</dbReference>
<dbReference type="RefSeq" id="NP_714285.2">
    <property type="nucleotide sequence ID" value="NC_004342.2"/>
</dbReference>
<dbReference type="SMR" id="Q8EYV8"/>
<dbReference type="STRING" id="189518.LA_4105"/>
<dbReference type="PaxDb" id="189518-LA_4105"/>
<dbReference type="EnsemblBacteria" id="AAN51303">
    <property type="protein sequence ID" value="AAN51303"/>
    <property type="gene ID" value="LA_4105"/>
</dbReference>
<dbReference type="KEGG" id="lil:LA_4105"/>
<dbReference type="PATRIC" id="fig|189518.3.peg.4072"/>
<dbReference type="HOGENOM" id="CLU_027172_1_0_12"/>
<dbReference type="InParanoid" id="Q8EYV8"/>
<dbReference type="OrthoDB" id="9804242at2"/>
<dbReference type="UniPathway" id="UPA00068">
    <property type="reaction ID" value="UER00106"/>
</dbReference>
<dbReference type="UniPathway" id="UPA00068">
    <property type="reaction ID" value="UER00111"/>
</dbReference>
<dbReference type="Proteomes" id="UP000001408">
    <property type="component" value="Chromosome I"/>
</dbReference>
<dbReference type="GO" id="GO:0005737">
    <property type="term" value="C:cytoplasm"/>
    <property type="evidence" value="ECO:0007669"/>
    <property type="project" value="UniProtKB-SubCell"/>
</dbReference>
<dbReference type="GO" id="GO:0004358">
    <property type="term" value="F:glutamate N-acetyltransferase activity"/>
    <property type="evidence" value="ECO:0007669"/>
    <property type="project" value="UniProtKB-UniRule"/>
</dbReference>
<dbReference type="GO" id="GO:0004042">
    <property type="term" value="F:L-glutamate N-acetyltransferase activity"/>
    <property type="evidence" value="ECO:0000318"/>
    <property type="project" value="GO_Central"/>
</dbReference>
<dbReference type="GO" id="GO:0006526">
    <property type="term" value="P:L-arginine biosynthetic process"/>
    <property type="evidence" value="ECO:0007669"/>
    <property type="project" value="UniProtKB-UniRule"/>
</dbReference>
<dbReference type="GO" id="GO:0006592">
    <property type="term" value="P:ornithine biosynthetic process"/>
    <property type="evidence" value="ECO:0000318"/>
    <property type="project" value="GO_Central"/>
</dbReference>
<dbReference type="CDD" id="cd02152">
    <property type="entry name" value="OAT"/>
    <property type="match status" value="1"/>
</dbReference>
<dbReference type="FunFam" id="3.10.20.340:FF:000003">
    <property type="entry name" value="Arginine biosynthesis bifunctional protein ArgJ"/>
    <property type="match status" value="1"/>
</dbReference>
<dbReference type="FunFam" id="3.60.70.12:FF:000001">
    <property type="entry name" value="Arginine biosynthesis bifunctional protein ArgJ, chloroplastic"/>
    <property type="match status" value="1"/>
</dbReference>
<dbReference type="Gene3D" id="3.10.20.340">
    <property type="entry name" value="ArgJ beta chain, C-terminal domain"/>
    <property type="match status" value="1"/>
</dbReference>
<dbReference type="Gene3D" id="3.60.70.12">
    <property type="entry name" value="L-amino peptidase D-ALA esterase/amidase"/>
    <property type="match status" value="1"/>
</dbReference>
<dbReference type="HAMAP" id="MF_01106">
    <property type="entry name" value="ArgJ"/>
    <property type="match status" value="1"/>
</dbReference>
<dbReference type="InterPro" id="IPR002813">
    <property type="entry name" value="Arg_biosynth_ArgJ"/>
</dbReference>
<dbReference type="InterPro" id="IPR016117">
    <property type="entry name" value="ArgJ-like_dom_sf"/>
</dbReference>
<dbReference type="InterPro" id="IPR042195">
    <property type="entry name" value="ArgJ_beta_C"/>
</dbReference>
<dbReference type="NCBIfam" id="TIGR00120">
    <property type="entry name" value="ArgJ"/>
    <property type="match status" value="1"/>
</dbReference>
<dbReference type="NCBIfam" id="NF003802">
    <property type="entry name" value="PRK05388.1"/>
    <property type="match status" value="1"/>
</dbReference>
<dbReference type="PANTHER" id="PTHR23100">
    <property type="entry name" value="ARGININE BIOSYNTHESIS BIFUNCTIONAL PROTEIN ARGJ"/>
    <property type="match status" value="1"/>
</dbReference>
<dbReference type="PANTHER" id="PTHR23100:SF0">
    <property type="entry name" value="ARGININE BIOSYNTHESIS BIFUNCTIONAL PROTEIN ARGJ, MITOCHONDRIAL"/>
    <property type="match status" value="1"/>
</dbReference>
<dbReference type="Pfam" id="PF01960">
    <property type="entry name" value="ArgJ"/>
    <property type="match status" value="1"/>
</dbReference>
<dbReference type="SUPFAM" id="SSF56266">
    <property type="entry name" value="DmpA/ArgJ-like"/>
    <property type="match status" value="1"/>
</dbReference>
<reference key="1">
    <citation type="journal article" date="2003" name="Nature">
        <title>Unique physiological and pathogenic features of Leptospira interrogans revealed by whole-genome sequencing.</title>
        <authorList>
            <person name="Ren S.-X."/>
            <person name="Fu G."/>
            <person name="Jiang X.-G."/>
            <person name="Zeng R."/>
            <person name="Miao Y.-G."/>
            <person name="Xu H."/>
            <person name="Zhang Y.-X."/>
            <person name="Xiong H."/>
            <person name="Lu G."/>
            <person name="Lu L.-F."/>
            <person name="Jiang H.-Q."/>
            <person name="Jia J."/>
            <person name="Tu Y.-F."/>
            <person name="Jiang J.-X."/>
            <person name="Gu W.-Y."/>
            <person name="Zhang Y.-Q."/>
            <person name="Cai Z."/>
            <person name="Sheng H.-H."/>
            <person name="Yin H.-F."/>
            <person name="Zhang Y."/>
            <person name="Zhu G.-F."/>
            <person name="Wan M."/>
            <person name="Huang H.-L."/>
            <person name="Qian Z."/>
            <person name="Wang S.-Y."/>
            <person name="Ma W."/>
            <person name="Yao Z.-J."/>
            <person name="Shen Y."/>
            <person name="Qiang B.-Q."/>
            <person name="Xia Q.-C."/>
            <person name="Guo X.-K."/>
            <person name="Danchin A."/>
            <person name="Saint Girons I."/>
            <person name="Somerville R.L."/>
            <person name="Wen Y.-M."/>
            <person name="Shi M.-H."/>
            <person name="Chen Z."/>
            <person name="Xu J.-G."/>
            <person name="Zhao G.-P."/>
        </authorList>
    </citation>
    <scope>NUCLEOTIDE SEQUENCE [LARGE SCALE GENOMIC DNA]</scope>
    <source>
        <strain>56601</strain>
    </source>
</reference>
<feature type="chain" id="PRO_0000002181" description="Arginine biosynthesis bifunctional protein ArgJ alpha chain" evidence="1">
    <location>
        <begin position="1"/>
        <end position="178"/>
    </location>
</feature>
<feature type="chain" id="PRO_0000002182" description="Arginine biosynthesis bifunctional protein ArgJ beta chain" evidence="1">
    <location>
        <begin position="179"/>
        <end position="385"/>
    </location>
</feature>
<feature type="active site" description="Nucleophile" evidence="1">
    <location>
        <position position="179"/>
    </location>
</feature>
<feature type="binding site" evidence="1">
    <location>
        <position position="142"/>
    </location>
    <ligand>
        <name>substrate</name>
    </ligand>
</feature>
<feature type="binding site" evidence="1">
    <location>
        <position position="168"/>
    </location>
    <ligand>
        <name>substrate</name>
    </ligand>
</feature>
<feature type="binding site" evidence="1">
    <location>
        <position position="179"/>
    </location>
    <ligand>
        <name>substrate</name>
    </ligand>
</feature>
<feature type="binding site" evidence="1">
    <location>
        <position position="259"/>
    </location>
    <ligand>
        <name>substrate</name>
    </ligand>
</feature>
<feature type="binding site" evidence="1">
    <location>
        <position position="380"/>
    </location>
    <ligand>
        <name>substrate</name>
    </ligand>
</feature>
<feature type="binding site" evidence="1">
    <location>
        <position position="385"/>
    </location>
    <ligand>
        <name>substrate</name>
    </ligand>
</feature>
<feature type="site" description="Involved in the stabilization of negative charge on the oxyanion by the formation of the oxyanion hole" evidence="1">
    <location>
        <position position="105"/>
    </location>
</feature>
<feature type="site" description="Involved in the stabilization of negative charge on the oxyanion by the formation of the oxyanion hole" evidence="1">
    <location>
        <position position="106"/>
    </location>
</feature>
<feature type="site" description="Cleavage; by autolysis" evidence="1">
    <location>
        <begin position="178"/>
        <end position="179"/>
    </location>
</feature>
<accession>Q8EYV8</accession>
<evidence type="ECO:0000255" key="1">
    <source>
        <dbReference type="HAMAP-Rule" id="MF_01106"/>
    </source>
</evidence>
<evidence type="ECO:0000305" key="2"/>
<comment type="function">
    <text evidence="1">Catalyzes two activities which are involved in the cyclic version of arginine biosynthesis: the synthesis of N-acetylglutamate from glutamate and acetyl-CoA as the acetyl donor, and of ornithine by transacetylation between N(2)-acetylornithine and glutamate.</text>
</comment>
<comment type="catalytic activity">
    <reaction evidence="1">
        <text>N(2)-acetyl-L-ornithine + L-glutamate = N-acetyl-L-glutamate + L-ornithine</text>
        <dbReference type="Rhea" id="RHEA:15349"/>
        <dbReference type="ChEBI" id="CHEBI:29985"/>
        <dbReference type="ChEBI" id="CHEBI:44337"/>
        <dbReference type="ChEBI" id="CHEBI:46911"/>
        <dbReference type="ChEBI" id="CHEBI:57805"/>
        <dbReference type="EC" id="2.3.1.35"/>
    </reaction>
</comment>
<comment type="catalytic activity">
    <reaction evidence="1">
        <text>L-glutamate + acetyl-CoA = N-acetyl-L-glutamate + CoA + H(+)</text>
        <dbReference type="Rhea" id="RHEA:24292"/>
        <dbReference type="ChEBI" id="CHEBI:15378"/>
        <dbReference type="ChEBI" id="CHEBI:29985"/>
        <dbReference type="ChEBI" id="CHEBI:44337"/>
        <dbReference type="ChEBI" id="CHEBI:57287"/>
        <dbReference type="ChEBI" id="CHEBI:57288"/>
        <dbReference type="EC" id="2.3.1.1"/>
    </reaction>
</comment>
<comment type="pathway">
    <text evidence="1">Amino-acid biosynthesis; L-arginine biosynthesis; L-ornithine and N-acetyl-L-glutamate from L-glutamate and N(2)-acetyl-L-ornithine (cyclic): step 1/1.</text>
</comment>
<comment type="pathway">
    <text evidence="1">Amino-acid biosynthesis; L-arginine biosynthesis; N(2)-acetyl-L-ornithine from L-glutamate: step 1/4.</text>
</comment>
<comment type="subunit">
    <text evidence="1">Heterotetramer of two alpha and two beta chains.</text>
</comment>
<comment type="subcellular location">
    <subcellularLocation>
        <location evidence="1">Cytoplasm</location>
    </subcellularLocation>
</comment>
<comment type="similarity">
    <text evidence="1">Belongs to the ArgJ family.</text>
</comment>
<comment type="sequence caution" evidence="2">
    <conflict type="erroneous initiation">
        <sequence resource="EMBL-CDS" id="AAN51303"/>
    </conflict>
    <text>Truncated N-terminus.</text>
</comment>
<sequence length="385" mass="41445">MHMPKGFLSFGINIGIKDDTKDFGVIYSEIPCKATAVFTKNNFPGAPVIVGKEHVRSGVLQAIVINSKNSNVATGEKGIQNSREICKIIGESLGIKETLVLPSSTGVIGVPLKMEIILPACKKAKSLLKPGNLEEVAEAIMTTDTRKKISSRNIKTKSGQGTIYGIAKGAGMIEPNMATMLCYILSDVSLPEGTDLYSILKSSVDQSFNCLTIDSDTSTSDTVALLCNGLSGESSVQDFSKALTEICIDLTKLIATDGEGATKLIELTISGAKSEAQARKIGKSILNSPLVKTAIYGGDPNWGRLIMAVGKVFDEPIPFEGLQIYFGTLPVKEANPETLKKLSEYLKNNTEISLNVVLNVGTISMKFWGCDFTEKYIEENAYYTT</sequence>
<gene>
    <name evidence="1" type="primary">argJ</name>
    <name type="ordered locus">LA_4105</name>
</gene>
<organism>
    <name type="scientific">Leptospira interrogans serogroup Icterohaemorrhagiae serovar Lai (strain 56601)</name>
    <dbReference type="NCBI Taxonomy" id="189518"/>
    <lineage>
        <taxon>Bacteria</taxon>
        <taxon>Pseudomonadati</taxon>
        <taxon>Spirochaetota</taxon>
        <taxon>Spirochaetia</taxon>
        <taxon>Leptospirales</taxon>
        <taxon>Leptospiraceae</taxon>
        <taxon>Leptospira</taxon>
    </lineage>
</organism>
<protein>
    <recommendedName>
        <fullName evidence="1">Arginine biosynthesis bifunctional protein ArgJ</fullName>
    </recommendedName>
    <domain>
        <recommendedName>
            <fullName evidence="1">Glutamate N-acetyltransferase</fullName>
            <ecNumber evidence="1">2.3.1.35</ecNumber>
        </recommendedName>
        <alternativeName>
            <fullName evidence="1">Ornithine acetyltransferase</fullName>
            <shortName evidence="1">OATase</shortName>
        </alternativeName>
        <alternativeName>
            <fullName evidence="1">Ornithine transacetylase</fullName>
        </alternativeName>
    </domain>
    <domain>
        <recommendedName>
            <fullName evidence="1">Amino-acid acetyltransferase</fullName>
            <ecNumber evidence="1">2.3.1.1</ecNumber>
        </recommendedName>
        <alternativeName>
            <fullName evidence="1">N-acetylglutamate synthase</fullName>
            <shortName evidence="1">AGSase</shortName>
        </alternativeName>
    </domain>
    <component>
        <recommendedName>
            <fullName evidence="1">Arginine biosynthesis bifunctional protein ArgJ alpha chain</fullName>
        </recommendedName>
    </component>
    <component>
        <recommendedName>
            <fullName evidence="1">Arginine biosynthesis bifunctional protein ArgJ beta chain</fullName>
        </recommendedName>
    </component>
</protein>
<keyword id="KW-0012">Acyltransferase</keyword>
<keyword id="KW-0028">Amino-acid biosynthesis</keyword>
<keyword id="KW-0055">Arginine biosynthesis</keyword>
<keyword id="KW-0068">Autocatalytic cleavage</keyword>
<keyword id="KW-0963">Cytoplasm</keyword>
<keyword id="KW-0511">Multifunctional enzyme</keyword>
<keyword id="KW-1185">Reference proteome</keyword>
<keyword id="KW-0808">Transferase</keyword>
<name>ARGJ_LEPIN</name>
<proteinExistence type="inferred from homology"/>